<feature type="chain" id="PRO_0000205119" description="Arginine repressor">
    <location>
        <begin position="1"/>
        <end position="150"/>
    </location>
</feature>
<proteinExistence type="inferred from homology"/>
<sequence>MPKKSVRHIKIREIISNEQIETQDELVKRLNDYDLNVTQATVSRDIKELQLIKVPIPSGQYVYSLPNDRKFHPLEKLGRYLMDSFVNIDGTDNLLVLKTLPGNAQSIGAILDQINWEEVLGTICGDDTCLIICRSKEASDEIKSRIFNLL</sequence>
<accession>P63581</accession>
<accession>Q99TX3</accession>
<name>ARGR_STAAW</name>
<organism>
    <name type="scientific">Staphylococcus aureus (strain MW2)</name>
    <dbReference type="NCBI Taxonomy" id="196620"/>
    <lineage>
        <taxon>Bacteria</taxon>
        <taxon>Bacillati</taxon>
        <taxon>Bacillota</taxon>
        <taxon>Bacilli</taxon>
        <taxon>Bacillales</taxon>
        <taxon>Staphylococcaceae</taxon>
        <taxon>Staphylococcus</taxon>
    </lineage>
</organism>
<reference key="1">
    <citation type="journal article" date="2002" name="Lancet">
        <title>Genome and virulence determinants of high virulence community-acquired MRSA.</title>
        <authorList>
            <person name="Baba T."/>
            <person name="Takeuchi F."/>
            <person name="Kuroda M."/>
            <person name="Yuzawa H."/>
            <person name="Aoki K."/>
            <person name="Oguchi A."/>
            <person name="Nagai Y."/>
            <person name="Iwama N."/>
            <person name="Asano K."/>
            <person name="Naimi T."/>
            <person name="Kuroda H."/>
            <person name="Cui L."/>
            <person name="Yamamoto K."/>
            <person name="Hiramatsu K."/>
        </authorList>
    </citation>
    <scope>NUCLEOTIDE SEQUENCE [LARGE SCALE GENOMIC DNA]</scope>
    <source>
        <strain>MW2</strain>
    </source>
</reference>
<keyword id="KW-0028">Amino-acid biosynthesis</keyword>
<keyword id="KW-0055">Arginine biosynthesis</keyword>
<keyword id="KW-0963">Cytoplasm</keyword>
<keyword id="KW-0238">DNA-binding</keyword>
<keyword id="KW-0678">Repressor</keyword>
<keyword id="KW-0804">Transcription</keyword>
<keyword id="KW-0805">Transcription regulation</keyword>
<gene>
    <name evidence="1" type="primary">argR</name>
    <name type="synonym">ahrC</name>
    <name type="ordered locus">MW1473</name>
</gene>
<evidence type="ECO:0000255" key="1">
    <source>
        <dbReference type="HAMAP-Rule" id="MF_00173"/>
    </source>
</evidence>
<comment type="function">
    <text evidence="1">Regulates arginine biosynthesis genes.</text>
</comment>
<comment type="pathway">
    <text>Amino-acid biosynthesis; L-arginine biosynthesis [regulation].</text>
</comment>
<comment type="subcellular location">
    <subcellularLocation>
        <location evidence="1">Cytoplasm</location>
    </subcellularLocation>
</comment>
<comment type="similarity">
    <text evidence="1">Belongs to the ArgR family.</text>
</comment>
<protein>
    <recommendedName>
        <fullName evidence="1">Arginine repressor</fullName>
    </recommendedName>
</protein>
<dbReference type="EMBL" id="BA000033">
    <property type="protein sequence ID" value="BAB95338.1"/>
    <property type="molecule type" value="Genomic_DNA"/>
</dbReference>
<dbReference type="RefSeq" id="WP_001124985.1">
    <property type="nucleotide sequence ID" value="NC_003923.1"/>
</dbReference>
<dbReference type="SMR" id="P63581"/>
<dbReference type="GeneID" id="98345891"/>
<dbReference type="KEGG" id="sam:MW1473"/>
<dbReference type="HOGENOM" id="CLU_097103_3_0_9"/>
<dbReference type="UniPathway" id="UPA00068"/>
<dbReference type="GO" id="GO:0005737">
    <property type="term" value="C:cytoplasm"/>
    <property type="evidence" value="ECO:0007669"/>
    <property type="project" value="UniProtKB-SubCell"/>
</dbReference>
<dbReference type="GO" id="GO:0034618">
    <property type="term" value="F:arginine binding"/>
    <property type="evidence" value="ECO:0007669"/>
    <property type="project" value="InterPro"/>
</dbReference>
<dbReference type="GO" id="GO:0003677">
    <property type="term" value="F:DNA binding"/>
    <property type="evidence" value="ECO:0007669"/>
    <property type="project" value="UniProtKB-KW"/>
</dbReference>
<dbReference type="GO" id="GO:0003700">
    <property type="term" value="F:DNA-binding transcription factor activity"/>
    <property type="evidence" value="ECO:0007669"/>
    <property type="project" value="UniProtKB-UniRule"/>
</dbReference>
<dbReference type="GO" id="GO:0006526">
    <property type="term" value="P:L-arginine biosynthetic process"/>
    <property type="evidence" value="ECO:0007669"/>
    <property type="project" value="UniProtKB-UniPathway"/>
</dbReference>
<dbReference type="GO" id="GO:0051259">
    <property type="term" value="P:protein complex oligomerization"/>
    <property type="evidence" value="ECO:0007669"/>
    <property type="project" value="InterPro"/>
</dbReference>
<dbReference type="GO" id="GO:1900079">
    <property type="term" value="P:regulation of arginine biosynthetic process"/>
    <property type="evidence" value="ECO:0007669"/>
    <property type="project" value="UniProtKB-UniRule"/>
</dbReference>
<dbReference type="Gene3D" id="3.30.1360.40">
    <property type="match status" value="1"/>
</dbReference>
<dbReference type="Gene3D" id="1.10.10.10">
    <property type="entry name" value="Winged helix-like DNA-binding domain superfamily/Winged helix DNA-binding domain"/>
    <property type="match status" value="1"/>
</dbReference>
<dbReference type="HAMAP" id="MF_00173">
    <property type="entry name" value="Arg_repressor"/>
    <property type="match status" value="1"/>
</dbReference>
<dbReference type="InterPro" id="IPR001669">
    <property type="entry name" value="Arg_repress"/>
</dbReference>
<dbReference type="InterPro" id="IPR020899">
    <property type="entry name" value="Arg_repress_C"/>
</dbReference>
<dbReference type="InterPro" id="IPR036251">
    <property type="entry name" value="Arg_repress_C_sf"/>
</dbReference>
<dbReference type="InterPro" id="IPR020900">
    <property type="entry name" value="Arg_repress_DNA-bd"/>
</dbReference>
<dbReference type="InterPro" id="IPR036388">
    <property type="entry name" value="WH-like_DNA-bd_sf"/>
</dbReference>
<dbReference type="InterPro" id="IPR036390">
    <property type="entry name" value="WH_DNA-bd_sf"/>
</dbReference>
<dbReference type="NCBIfam" id="TIGR01529">
    <property type="entry name" value="argR_whole"/>
    <property type="match status" value="1"/>
</dbReference>
<dbReference type="NCBIfam" id="NF003281">
    <property type="entry name" value="PRK04280.1"/>
    <property type="match status" value="1"/>
</dbReference>
<dbReference type="PANTHER" id="PTHR34471">
    <property type="entry name" value="ARGININE REPRESSOR"/>
    <property type="match status" value="1"/>
</dbReference>
<dbReference type="PANTHER" id="PTHR34471:SF1">
    <property type="entry name" value="ARGININE REPRESSOR"/>
    <property type="match status" value="1"/>
</dbReference>
<dbReference type="Pfam" id="PF01316">
    <property type="entry name" value="Arg_repressor"/>
    <property type="match status" value="1"/>
</dbReference>
<dbReference type="Pfam" id="PF02863">
    <property type="entry name" value="Arg_repressor_C"/>
    <property type="match status" value="1"/>
</dbReference>
<dbReference type="PRINTS" id="PR01467">
    <property type="entry name" value="ARGREPRESSOR"/>
</dbReference>
<dbReference type="SUPFAM" id="SSF55252">
    <property type="entry name" value="C-terminal domain of arginine repressor"/>
    <property type="match status" value="1"/>
</dbReference>
<dbReference type="SUPFAM" id="SSF46785">
    <property type="entry name" value="Winged helix' DNA-binding domain"/>
    <property type="match status" value="1"/>
</dbReference>